<gene>
    <name evidence="1" type="primary">atpF2</name>
    <name type="ordered locus">BAbS19_I03830</name>
</gene>
<protein>
    <recommendedName>
        <fullName evidence="1">ATP synthase subunit b 2</fullName>
    </recommendedName>
    <alternativeName>
        <fullName evidence="1">ATP synthase F(0) sector subunit b 2</fullName>
    </alternativeName>
    <alternativeName>
        <fullName evidence="1">ATPase subunit I 2</fullName>
    </alternativeName>
    <alternativeName>
        <fullName evidence="1">F-type ATPase subunit b 2</fullName>
        <shortName evidence="1">F-ATPase subunit b 2</shortName>
    </alternativeName>
</protein>
<proteinExistence type="inferred from homology"/>
<keyword id="KW-0066">ATP synthesis</keyword>
<keyword id="KW-0997">Cell inner membrane</keyword>
<keyword id="KW-1003">Cell membrane</keyword>
<keyword id="KW-0138">CF(0)</keyword>
<keyword id="KW-0375">Hydrogen ion transport</keyword>
<keyword id="KW-0406">Ion transport</keyword>
<keyword id="KW-0472">Membrane</keyword>
<keyword id="KW-0812">Transmembrane</keyword>
<keyword id="KW-1133">Transmembrane helix</keyword>
<keyword id="KW-0813">Transport</keyword>
<evidence type="ECO:0000255" key="1">
    <source>
        <dbReference type="HAMAP-Rule" id="MF_01398"/>
    </source>
</evidence>
<name>ATPF2_BRUA1</name>
<accession>B2S9N1</accession>
<reference key="1">
    <citation type="journal article" date="2008" name="PLoS ONE">
        <title>Genome sequence of Brucella abortus vaccine strain S19 compared to virulent strains yields candidate virulence genes.</title>
        <authorList>
            <person name="Crasta O.R."/>
            <person name="Folkerts O."/>
            <person name="Fei Z."/>
            <person name="Mane S.P."/>
            <person name="Evans C."/>
            <person name="Martino-Catt S."/>
            <person name="Bricker B."/>
            <person name="Yu G."/>
            <person name="Du L."/>
            <person name="Sobral B.W."/>
        </authorList>
    </citation>
    <scope>NUCLEOTIDE SEQUENCE [LARGE SCALE GENOMIC DNA]</scope>
    <source>
        <strain>S19</strain>
    </source>
</reference>
<organism>
    <name type="scientific">Brucella abortus (strain S19)</name>
    <dbReference type="NCBI Taxonomy" id="430066"/>
    <lineage>
        <taxon>Bacteria</taxon>
        <taxon>Pseudomonadati</taxon>
        <taxon>Pseudomonadota</taxon>
        <taxon>Alphaproteobacteria</taxon>
        <taxon>Hyphomicrobiales</taxon>
        <taxon>Brucellaceae</taxon>
        <taxon>Brucella/Ochrobactrum group</taxon>
        <taxon>Brucella</taxon>
    </lineage>
</organism>
<comment type="function">
    <text evidence="1">F(1)F(0) ATP synthase produces ATP from ADP in the presence of a proton or sodium gradient. F-type ATPases consist of two structural domains, F(1) containing the extramembraneous catalytic core and F(0) containing the membrane proton channel, linked together by a central stalk and a peripheral stalk. During catalysis, ATP synthesis in the catalytic domain of F(1) is coupled via a rotary mechanism of the central stalk subunits to proton translocation.</text>
</comment>
<comment type="function">
    <text evidence="1">Component of the F(0) channel, it forms part of the peripheral stalk, linking F(1) to F(0).</text>
</comment>
<comment type="subunit">
    <text evidence="1">F-type ATPases have 2 components, F(1) - the catalytic core - and F(0) - the membrane proton channel. F(1) has five subunits: alpha(3), beta(3), gamma(1), delta(1), epsilon(1). F(0) has three main subunits: a(1), b(2) and c(10-14). The alpha and beta chains form an alternating ring which encloses part of the gamma chain. F(1) is attached to F(0) by a central stalk formed by the gamma and epsilon chains, while a peripheral stalk is formed by the delta and b chains.</text>
</comment>
<comment type="subcellular location">
    <subcellularLocation>
        <location evidence="1">Cell inner membrane</location>
        <topology evidence="1">Single-pass membrane protein</topology>
    </subcellularLocation>
</comment>
<comment type="similarity">
    <text evidence="1">Belongs to the ATPase B chain family.</text>
</comment>
<sequence>MDATFWAFIALVIFVAIVVYMKVPGMIGRTLDERADRIKKELEEARTLREEAQQLLAEYHRKRKEAEKEAGDIVASAEREAKALLEEAKRATEEYVARRNKLAEQKIATAETDAINAVRASAVDLAVAAAGSILAEKVDAKADGNLFNDALAQVKSHLN</sequence>
<dbReference type="EMBL" id="CP000887">
    <property type="protein sequence ID" value="ACD71922.1"/>
    <property type="molecule type" value="Genomic_DNA"/>
</dbReference>
<dbReference type="RefSeq" id="WP_002963546.1">
    <property type="nucleotide sequence ID" value="NC_010742.1"/>
</dbReference>
<dbReference type="SMR" id="B2S9N1"/>
<dbReference type="KEGG" id="bmc:BAbS19_I03830"/>
<dbReference type="HOGENOM" id="CLU_079215_6_1_5"/>
<dbReference type="Proteomes" id="UP000002565">
    <property type="component" value="Chromosome 1"/>
</dbReference>
<dbReference type="GO" id="GO:0005886">
    <property type="term" value="C:plasma membrane"/>
    <property type="evidence" value="ECO:0007669"/>
    <property type="project" value="UniProtKB-SubCell"/>
</dbReference>
<dbReference type="GO" id="GO:0045259">
    <property type="term" value="C:proton-transporting ATP synthase complex"/>
    <property type="evidence" value="ECO:0007669"/>
    <property type="project" value="UniProtKB-KW"/>
</dbReference>
<dbReference type="GO" id="GO:0046933">
    <property type="term" value="F:proton-transporting ATP synthase activity, rotational mechanism"/>
    <property type="evidence" value="ECO:0007669"/>
    <property type="project" value="UniProtKB-UniRule"/>
</dbReference>
<dbReference type="GO" id="GO:0046961">
    <property type="term" value="F:proton-transporting ATPase activity, rotational mechanism"/>
    <property type="evidence" value="ECO:0007669"/>
    <property type="project" value="TreeGrafter"/>
</dbReference>
<dbReference type="CDD" id="cd06503">
    <property type="entry name" value="ATP-synt_Fo_b"/>
    <property type="match status" value="1"/>
</dbReference>
<dbReference type="HAMAP" id="MF_01398">
    <property type="entry name" value="ATP_synth_b_bprime"/>
    <property type="match status" value="1"/>
</dbReference>
<dbReference type="InterPro" id="IPR002146">
    <property type="entry name" value="ATP_synth_b/b'su_bac/chlpt"/>
</dbReference>
<dbReference type="InterPro" id="IPR050059">
    <property type="entry name" value="ATP_synthase_B_chain"/>
</dbReference>
<dbReference type="NCBIfam" id="NF006611">
    <property type="entry name" value="PRK09173.1"/>
    <property type="match status" value="1"/>
</dbReference>
<dbReference type="PANTHER" id="PTHR33445:SF1">
    <property type="entry name" value="ATP SYNTHASE SUBUNIT B"/>
    <property type="match status" value="1"/>
</dbReference>
<dbReference type="PANTHER" id="PTHR33445">
    <property type="entry name" value="ATP SYNTHASE SUBUNIT B', CHLOROPLASTIC"/>
    <property type="match status" value="1"/>
</dbReference>
<dbReference type="Pfam" id="PF00430">
    <property type="entry name" value="ATP-synt_B"/>
    <property type="match status" value="1"/>
</dbReference>
<feature type="chain" id="PRO_0000368368" description="ATP synthase subunit b 2">
    <location>
        <begin position="1"/>
        <end position="159"/>
    </location>
</feature>
<feature type="transmembrane region" description="Helical" evidence="1">
    <location>
        <begin position="1"/>
        <end position="21"/>
    </location>
</feature>